<keyword id="KW-0249">Electron transport</keyword>
<keyword id="KW-0349">Heme</keyword>
<keyword id="KW-0408">Iron</keyword>
<keyword id="KW-0472">Membrane</keyword>
<keyword id="KW-0479">Metal-binding</keyword>
<keyword id="KW-0496">Mitochondrion</keyword>
<keyword id="KW-0999">Mitochondrion inner membrane</keyword>
<keyword id="KW-0679">Respiratory chain</keyword>
<keyword id="KW-0812">Transmembrane</keyword>
<keyword id="KW-1133">Transmembrane helix</keyword>
<keyword id="KW-0813">Transport</keyword>
<keyword id="KW-0830">Ubiquinone</keyword>
<name>CYB_MICBE</name>
<proteinExistence type="inferred from homology"/>
<evidence type="ECO:0000250" key="1"/>
<evidence type="ECO:0000250" key="2">
    <source>
        <dbReference type="UniProtKB" id="P00157"/>
    </source>
</evidence>
<evidence type="ECO:0000255" key="3">
    <source>
        <dbReference type="PROSITE-ProRule" id="PRU00967"/>
    </source>
</evidence>
<evidence type="ECO:0000255" key="4">
    <source>
        <dbReference type="PROSITE-ProRule" id="PRU00968"/>
    </source>
</evidence>
<sequence length="379" mass="42620">MTNIRKTHPLMKIMNSSFIDLPAPSNISSWWNFGSLLGACLAIQIITGLFLAMHYTADTATAFSSVTHICRDVNQGWIIRYLHANGASMFFLCLFLHVGRGMYYGSFSLSETWNIGIILLFTVMATAFMGYVLPWGQMSFWGATVITNLLSAIPYIGTDLVEWIWGGFSVDKATLTRFFAFHFILPFIISALVLVHLLFLHETGSNNPLGTSSESDKIPFHPYYTIKDLLGLMFLLLTLTILVLFSPDLLGDPDNYMPANPLSTPPHIKPEWYFLFAYAILRSIPNKLGGVLALIMSILILAIIPILQTAKQRSMMFRPLSQIMFWILTADLFTLTWIGGQPVEHPFVTIGQVASILYFSLILIIMPTVSLIENKMLKW</sequence>
<dbReference type="EMBL" id="AF285540">
    <property type="protein sequence ID" value="AAG30685.1"/>
    <property type="molecule type" value="Genomic_DNA"/>
</dbReference>
<dbReference type="EMBL" id="AF285541">
    <property type="protein sequence ID" value="AAG30686.1"/>
    <property type="molecule type" value="Genomic_DNA"/>
</dbReference>
<dbReference type="EMBL" id="AF285542">
    <property type="protein sequence ID" value="AAG30687.1"/>
    <property type="molecule type" value="Genomic_DNA"/>
</dbReference>
<dbReference type="EMBL" id="AF285543">
    <property type="protein sequence ID" value="AAG30688.1"/>
    <property type="molecule type" value="Genomic_DNA"/>
</dbReference>
<dbReference type="EMBL" id="AY441459">
    <property type="protein sequence ID" value="AAS00140.1"/>
    <property type="molecule type" value="Genomic_DNA"/>
</dbReference>
<dbReference type="SMR" id="Q9G273"/>
<dbReference type="GO" id="GO:0005743">
    <property type="term" value="C:mitochondrial inner membrane"/>
    <property type="evidence" value="ECO:0007669"/>
    <property type="project" value="UniProtKB-SubCell"/>
</dbReference>
<dbReference type="GO" id="GO:0045275">
    <property type="term" value="C:respiratory chain complex III"/>
    <property type="evidence" value="ECO:0007669"/>
    <property type="project" value="InterPro"/>
</dbReference>
<dbReference type="GO" id="GO:0046872">
    <property type="term" value="F:metal ion binding"/>
    <property type="evidence" value="ECO:0007669"/>
    <property type="project" value="UniProtKB-KW"/>
</dbReference>
<dbReference type="GO" id="GO:0008121">
    <property type="term" value="F:ubiquinol-cytochrome-c reductase activity"/>
    <property type="evidence" value="ECO:0007669"/>
    <property type="project" value="InterPro"/>
</dbReference>
<dbReference type="GO" id="GO:0006122">
    <property type="term" value="P:mitochondrial electron transport, ubiquinol to cytochrome c"/>
    <property type="evidence" value="ECO:0007669"/>
    <property type="project" value="TreeGrafter"/>
</dbReference>
<dbReference type="CDD" id="cd00290">
    <property type="entry name" value="cytochrome_b_C"/>
    <property type="match status" value="1"/>
</dbReference>
<dbReference type="CDD" id="cd00284">
    <property type="entry name" value="Cytochrome_b_N"/>
    <property type="match status" value="1"/>
</dbReference>
<dbReference type="FunFam" id="1.20.810.10:FF:000002">
    <property type="entry name" value="Cytochrome b"/>
    <property type="match status" value="1"/>
</dbReference>
<dbReference type="Gene3D" id="1.20.810.10">
    <property type="entry name" value="Cytochrome Bc1 Complex, Chain C"/>
    <property type="match status" value="1"/>
</dbReference>
<dbReference type="InterPro" id="IPR005798">
    <property type="entry name" value="Cyt_b/b6_C"/>
</dbReference>
<dbReference type="InterPro" id="IPR036150">
    <property type="entry name" value="Cyt_b/b6_C_sf"/>
</dbReference>
<dbReference type="InterPro" id="IPR005797">
    <property type="entry name" value="Cyt_b/b6_N"/>
</dbReference>
<dbReference type="InterPro" id="IPR027387">
    <property type="entry name" value="Cytb/b6-like_sf"/>
</dbReference>
<dbReference type="InterPro" id="IPR030689">
    <property type="entry name" value="Cytochrome_b"/>
</dbReference>
<dbReference type="InterPro" id="IPR048260">
    <property type="entry name" value="Cytochrome_b_C_euk/bac"/>
</dbReference>
<dbReference type="InterPro" id="IPR048259">
    <property type="entry name" value="Cytochrome_b_N_euk/bac"/>
</dbReference>
<dbReference type="InterPro" id="IPR016174">
    <property type="entry name" value="Di-haem_cyt_TM"/>
</dbReference>
<dbReference type="PANTHER" id="PTHR19271">
    <property type="entry name" value="CYTOCHROME B"/>
    <property type="match status" value="1"/>
</dbReference>
<dbReference type="PANTHER" id="PTHR19271:SF16">
    <property type="entry name" value="CYTOCHROME B"/>
    <property type="match status" value="1"/>
</dbReference>
<dbReference type="Pfam" id="PF00032">
    <property type="entry name" value="Cytochrom_B_C"/>
    <property type="match status" value="1"/>
</dbReference>
<dbReference type="Pfam" id="PF00033">
    <property type="entry name" value="Cytochrome_B"/>
    <property type="match status" value="1"/>
</dbReference>
<dbReference type="PIRSF" id="PIRSF038885">
    <property type="entry name" value="COB"/>
    <property type="match status" value="1"/>
</dbReference>
<dbReference type="SUPFAM" id="SSF81648">
    <property type="entry name" value="a domain/subunit of cytochrome bc1 complex (Ubiquinol-cytochrome c reductase)"/>
    <property type="match status" value="1"/>
</dbReference>
<dbReference type="SUPFAM" id="SSF81342">
    <property type="entry name" value="Transmembrane di-heme cytochromes"/>
    <property type="match status" value="1"/>
</dbReference>
<dbReference type="PROSITE" id="PS51003">
    <property type="entry name" value="CYTB_CTER"/>
    <property type="match status" value="1"/>
</dbReference>
<dbReference type="PROSITE" id="PS51002">
    <property type="entry name" value="CYTB_NTER"/>
    <property type="match status" value="1"/>
</dbReference>
<feature type="chain" id="PRO_0000061176" description="Cytochrome b">
    <location>
        <begin position="1"/>
        <end position="379"/>
    </location>
</feature>
<feature type="transmembrane region" description="Helical" evidence="2">
    <location>
        <begin position="33"/>
        <end position="53"/>
    </location>
</feature>
<feature type="transmembrane region" description="Helical" evidence="2">
    <location>
        <begin position="77"/>
        <end position="98"/>
    </location>
</feature>
<feature type="transmembrane region" description="Helical" evidence="2">
    <location>
        <begin position="113"/>
        <end position="133"/>
    </location>
</feature>
<feature type="transmembrane region" description="Helical" evidence="2">
    <location>
        <begin position="178"/>
        <end position="198"/>
    </location>
</feature>
<feature type="transmembrane region" description="Helical" evidence="2">
    <location>
        <begin position="226"/>
        <end position="246"/>
    </location>
</feature>
<feature type="transmembrane region" description="Helical" evidence="2">
    <location>
        <begin position="288"/>
        <end position="308"/>
    </location>
</feature>
<feature type="transmembrane region" description="Helical" evidence="2">
    <location>
        <begin position="320"/>
        <end position="340"/>
    </location>
</feature>
<feature type="transmembrane region" description="Helical" evidence="2">
    <location>
        <begin position="347"/>
        <end position="367"/>
    </location>
</feature>
<feature type="binding site" description="axial binding residue" evidence="2">
    <location>
        <position position="83"/>
    </location>
    <ligand>
        <name>heme b</name>
        <dbReference type="ChEBI" id="CHEBI:60344"/>
        <label>b562</label>
    </ligand>
    <ligandPart>
        <name>Fe</name>
        <dbReference type="ChEBI" id="CHEBI:18248"/>
    </ligandPart>
</feature>
<feature type="binding site" description="axial binding residue" evidence="2">
    <location>
        <position position="97"/>
    </location>
    <ligand>
        <name>heme b</name>
        <dbReference type="ChEBI" id="CHEBI:60344"/>
        <label>b566</label>
    </ligand>
    <ligandPart>
        <name>Fe</name>
        <dbReference type="ChEBI" id="CHEBI:18248"/>
    </ligandPart>
</feature>
<feature type="binding site" description="axial binding residue" evidence="2">
    <location>
        <position position="182"/>
    </location>
    <ligand>
        <name>heme b</name>
        <dbReference type="ChEBI" id="CHEBI:60344"/>
        <label>b562</label>
    </ligand>
    <ligandPart>
        <name>Fe</name>
        <dbReference type="ChEBI" id="CHEBI:18248"/>
    </ligandPart>
</feature>
<feature type="binding site" description="axial binding residue" evidence="2">
    <location>
        <position position="196"/>
    </location>
    <ligand>
        <name>heme b</name>
        <dbReference type="ChEBI" id="CHEBI:60344"/>
        <label>b566</label>
    </ligand>
    <ligandPart>
        <name>Fe</name>
        <dbReference type="ChEBI" id="CHEBI:18248"/>
    </ligandPart>
</feature>
<feature type="binding site" evidence="2">
    <location>
        <position position="201"/>
    </location>
    <ligand>
        <name>a ubiquinone</name>
        <dbReference type="ChEBI" id="CHEBI:16389"/>
    </ligand>
</feature>
<accession>Q9G273</accession>
<organism>
    <name type="scientific">Microcebus berthae</name>
    <name type="common">Berthe's mouse lemur</name>
    <dbReference type="NCBI Taxonomy" id="143352"/>
    <lineage>
        <taxon>Eukaryota</taxon>
        <taxon>Metazoa</taxon>
        <taxon>Chordata</taxon>
        <taxon>Craniata</taxon>
        <taxon>Vertebrata</taxon>
        <taxon>Euteleostomi</taxon>
        <taxon>Mammalia</taxon>
        <taxon>Eutheria</taxon>
        <taxon>Euarchontoglires</taxon>
        <taxon>Primates</taxon>
        <taxon>Strepsirrhini</taxon>
        <taxon>Lemuriformes</taxon>
        <taxon>Cheirogaleidae</taxon>
        <taxon>Microcebus</taxon>
    </lineage>
</organism>
<reference key="1">
    <citation type="journal article" date="2000" name="Proc. Natl. Acad. Sci. U.S.A.">
        <title>Remarkable species diversity in Malagasy mouse lemurs (primates, Microcebus).</title>
        <authorList>
            <person name="Yoder A.D."/>
            <person name="Rasoloarison R.M."/>
            <person name="Goodman S.M."/>
            <person name="Irwin J.A."/>
            <person name="Atsalis S."/>
            <person name="Ravosa M.J."/>
            <person name="Ganzhorn J.U."/>
        </authorList>
    </citation>
    <scope>NUCLEOTIDE SEQUENCE [GENOMIC DNA]</scope>
</reference>
<reference key="2">
    <citation type="submission" date="2003-10" db="EMBL/GenBank/DDBJ databases">
        <title>61 primate SINEs and the evolution of strepsirrhines.</title>
        <authorList>
            <person name="Roos C."/>
            <person name="Schmitz J."/>
            <person name="Zischler H."/>
        </authorList>
    </citation>
    <scope>NUCLEOTIDE SEQUENCE [GENOMIC DNA]</scope>
</reference>
<comment type="function">
    <text evidence="2">Component of the ubiquinol-cytochrome c reductase complex (complex III or cytochrome b-c1 complex) that is part of the mitochondrial respiratory chain. The b-c1 complex mediates electron transfer from ubiquinol to cytochrome c. Contributes to the generation of a proton gradient across the mitochondrial membrane that is then used for ATP synthesis.</text>
</comment>
<comment type="cofactor">
    <cofactor evidence="2">
        <name>heme b</name>
        <dbReference type="ChEBI" id="CHEBI:60344"/>
    </cofactor>
    <text evidence="2">Binds 2 heme b groups non-covalently.</text>
</comment>
<comment type="subunit">
    <text evidence="2">The cytochrome bc1 complex contains 11 subunits: 3 respiratory subunits (MT-CYB, CYC1 and UQCRFS1), 2 core proteins (UQCRC1 and UQCRC2) and 6 low-molecular weight proteins (UQCRH/QCR6, UQCRB/QCR7, UQCRQ/QCR8, UQCR10/QCR9, UQCR11/QCR10 and a cleavage product of UQCRFS1). This cytochrome bc1 complex then forms a dimer.</text>
</comment>
<comment type="subcellular location">
    <subcellularLocation>
        <location evidence="2">Mitochondrion inner membrane</location>
        <topology evidence="2">Multi-pass membrane protein</topology>
    </subcellularLocation>
</comment>
<comment type="miscellaneous">
    <text evidence="1">Heme 1 (or BL or b562) is low-potential and absorbs at about 562 nm, and heme 2 (or BH or b566) is high-potential and absorbs at about 566 nm.</text>
</comment>
<comment type="similarity">
    <text evidence="3 4">Belongs to the cytochrome b family.</text>
</comment>
<comment type="caution">
    <text evidence="2">The full-length protein contains only eight transmembrane helices, not nine as predicted by bioinformatics tools.</text>
</comment>
<gene>
    <name type="primary">MT-CYB</name>
    <name type="synonym">COB</name>
    <name type="synonym">CYTB</name>
    <name type="synonym">MTCYB</name>
</gene>
<geneLocation type="mitochondrion"/>
<protein>
    <recommendedName>
        <fullName>Cytochrome b</fullName>
    </recommendedName>
    <alternativeName>
        <fullName>Complex III subunit 3</fullName>
    </alternativeName>
    <alternativeName>
        <fullName>Complex III subunit III</fullName>
    </alternativeName>
    <alternativeName>
        <fullName>Cytochrome b-c1 complex subunit 3</fullName>
    </alternativeName>
    <alternativeName>
        <fullName>Ubiquinol-cytochrome-c reductase complex cytochrome b subunit</fullName>
    </alternativeName>
</protein>